<organism>
    <name type="scientific">Variovorax paradoxus (strain S110)</name>
    <dbReference type="NCBI Taxonomy" id="543728"/>
    <lineage>
        <taxon>Bacteria</taxon>
        <taxon>Pseudomonadati</taxon>
        <taxon>Pseudomonadota</taxon>
        <taxon>Betaproteobacteria</taxon>
        <taxon>Burkholderiales</taxon>
        <taxon>Comamonadaceae</taxon>
        <taxon>Variovorax</taxon>
    </lineage>
</organism>
<sequence>MAKKIVGFIKLQVPAGKANPSPPIGPALGQRGLNIMEFCKAFNAQTQSVEPGLPLPVVITAFADKSFTFIIKTPPAITLIKKAIKLDKGSARPHTDKVGKITRAQLEEIAKTKMKDLTAADLDAAVRTIAGSARSMGVNVEGV</sequence>
<gene>
    <name evidence="1" type="primary">rplK</name>
    <name type="ordered locus">Vapar_0584</name>
</gene>
<name>RL11_VARPS</name>
<dbReference type="EMBL" id="CP001635">
    <property type="protein sequence ID" value="ACS17247.1"/>
    <property type="molecule type" value="Genomic_DNA"/>
</dbReference>
<dbReference type="SMR" id="C5CKE9"/>
<dbReference type="STRING" id="543728.Vapar_0584"/>
<dbReference type="KEGG" id="vap:Vapar_0584"/>
<dbReference type="eggNOG" id="COG0080">
    <property type="taxonomic scope" value="Bacteria"/>
</dbReference>
<dbReference type="HOGENOM" id="CLU_074237_2_0_4"/>
<dbReference type="OrthoDB" id="9802408at2"/>
<dbReference type="GO" id="GO:0022625">
    <property type="term" value="C:cytosolic large ribosomal subunit"/>
    <property type="evidence" value="ECO:0007669"/>
    <property type="project" value="TreeGrafter"/>
</dbReference>
<dbReference type="GO" id="GO:0070180">
    <property type="term" value="F:large ribosomal subunit rRNA binding"/>
    <property type="evidence" value="ECO:0007669"/>
    <property type="project" value="UniProtKB-UniRule"/>
</dbReference>
<dbReference type="GO" id="GO:0003735">
    <property type="term" value="F:structural constituent of ribosome"/>
    <property type="evidence" value="ECO:0007669"/>
    <property type="project" value="InterPro"/>
</dbReference>
<dbReference type="GO" id="GO:0006412">
    <property type="term" value="P:translation"/>
    <property type="evidence" value="ECO:0007669"/>
    <property type="project" value="UniProtKB-UniRule"/>
</dbReference>
<dbReference type="CDD" id="cd00349">
    <property type="entry name" value="Ribosomal_L11"/>
    <property type="match status" value="1"/>
</dbReference>
<dbReference type="FunFam" id="1.10.10.250:FF:000001">
    <property type="entry name" value="50S ribosomal protein L11"/>
    <property type="match status" value="1"/>
</dbReference>
<dbReference type="FunFam" id="3.30.1550.10:FF:000001">
    <property type="entry name" value="50S ribosomal protein L11"/>
    <property type="match status" value="1"/>
</dbReference>
<dbReference type="Gene3D" id="1.10.10.250">
    <property type="entry name" value="Ribosomal protein L11, C-terminal domain"/>
    <property type="match status" value="1"/>
</dbReference>
<dbReference type="Gene3D" id="3.30.1550.10">
    <property type="entry name" value="Ribosomal protein L11/L12, N-terminal domain"/>
    <property type="match status" value="1"/>
</dbReference>
<dbReference type="HAMAP" id="MF_00736">
    <property type="entry name" value="Ribosomal_uL11"/>
    <property type="match status" value="1"/>
</dbReference>
<dbReference type="InterPro" id="IPR000911">
    <property type="entry name" value="Ribosomal_uL11"/>
</dbReference>
<dbReference type="InterPro" id="IPR006519">
    <property type="entry name" value="Ribosomal_uL11_bac-typ"/>
</dbReference>
<dbReference type="InterPro" id="IPR020783">
    <property type="entry name" value="Ribosomal_uL11_C"/>
</dbReference>
<dbReference type="InterPro" id="IPR036769">
    <property type="entry name" value="Ribosomal_uL11_C_sf"/>
</dbReference>
<dbReference type="InterPro" id="IPR020785">
    <property type="entry name" value="Ribosomal_uL11_CS"/>
</dbReference>
<dbReference type="InterPro" id="IPR020784">
    <property type="entry name" value="Ribosomal_uL11_N"/>
</dbReference>
<dbReference type="InterPro" id="IPR036796">
    <property type="entry name" value="Ribosomal_uL11_N_sf"/>
</dbReference>
<dbReference type="NCBIfam" id="TIGR01632">
    <property type="entry name" value="L11_bact"/>
    <property type="match status" value="1"/>
</dbReference>
<dbReference type="PANTHER" id="PTHR11661">
    <property type="entry name" value="60S RIBOSOMAL PROTEIN L12"/>
    <property type="match status" value="1"/>
</dbReference>
<dbReference type="PANTHER" id="PTHR11661:SF1">
    <property type="entry name" value="LARGE RIBOSOMAL SUBUNIT PROTEIN UL11M"/>
    <property type="match status" value="1"/>
</dbReference>
<dbReference type="Pfam" id="PF00298">
    <property type="entry name" value="Ribosomal_L11"/>
    <property type="match status" value="1"/>
</dbReference>
<dbReference type="Pfam" id="PF03946">
    <property type="entry name" value="Ribosomal_L11_N"/>
    <property type="match status" value="1"/>
</dbReference>
<dbReference type="SMART" id="SM00649">
    <property type="entry name" value="RL11"/>
    <property type="match status" value="1"/>
</dbReference>
<dbReference type="SUPFAM" id="SSF54747">
    <property type="entry name" value="Ribosomal L11/L12e N-terminal domain"/>
    <property type="match status" value="1"/>
</dbReference>
<dbReference type="SUPFAM" id="SSF46906">
    <property type="entry name" value="Ribosomal protein L11, C-terminal domain"/>
    <property type="match status" value="1"/>
</dbReference>
<dbReference type="PROSITE" id="PS00359">
    <property type="entry name" value="RIBOSOMAL_L11"/>
    <property type="match status" value="1"/>
</dbReference>
<proteinExistence type="inferred from homology"/>
<reference key="1">
    <citation type="journal article" date="2011" name="J. Bacteriol.">
        <title>Complete genome sequence of the metabolically versatile plant growth-promoting endophyte, Variovorax paradoxus S110.</title>
        <authorList>
            <person name="Han J.I."/>
            <person name="Choi H.K."/>
            <person name="Lee S.W."/>
            <person name="Orwin P.M."/>
            <person name="Kim J."/>
            <person name="Laroe S.L."/>
            <person name="Kim T.G."/>
            <person name="O'Neil J."/>
            <person name="Leadbetter J.R."/>
            <person name="Lee S.Y."/>
            <person name="Hur C.G."/>
            <person name="Spain J.C."/>
            <person name="Ovchinnikova G."/>
            <person name="Goodwin L."/>
            <person name="Han C."/>
        </authorList>
    </citation>
    <scope>NUCLEOTIDE SEQUENCE [LARGE SCALE GENOMIC DNA]</scope>
    <source>
        <strain>S110</strain>
    </source>
</reference>
<comment type="function">
    <text evidence="1">Forms part of the ribosomal stalk which helps the ribosome interact with GTP-bound translation factors.</text>
</comment>
<comment type="subunit">
    <text evidence="1">Part of the ribosomal stalk of the 50S ribosomal subunit. Interacts with L10 and the large rRNA to form the base of the stalk. L10 forms an elongated spine to which L12 dimers bind in a sequential fashion forming a multimeric L10(L12)X complex.</text>
</comment>
<comment type="PTM">
    <text evidence="1">One or more lysine residues are methylated.</text>
</comment>
<comment type="similarity">
    <text evidence="1">Belongs to the universal ribosomal protein uL11 family.</text>
</comment>
<accession>C5CKE9</accession>
<protein>
    <recommendedName>
        <fullName evidence="1">Large ribosomal subunit protein uL11</fullName>
    </recommendedName>
    <alternativeName>
        <fullName evidence="2">50S ribosomal protein L11</fullName>
    </alternativeName>
</protein>
<evidence type="ECO:0000255" key="1">
    <source>
        <dbReference type="HAMAP-Rule" id="MF_00736"/>
    </source>
</evidence>
<evidence type="ECO:0000305" key="2"/>
<feature type="chain" id="PRO_1000212797" description="Large ribosomal subunit protein uL11">
    <location>
        <begin position="1"/>
        <end position="143"/>
    </location>
</feature>
<keyword id="KW-0488">Methylation</keyword>
<keyword id="KW-0687">Ribonucleoprotein</keyword>
<keyword id="KW-0689">Ribosomal protein</keyword>
<keyword id="KW-0694">RNA-binding</keyword>
<keyword id="KW-0699">rRNA-binding</keyword>